<evidence type="ECO:0000255" key="1">
    <source>
        <dbReference type="PROSITE-ProRule" id="PRU00080"/>
    </source>
</evidence>
<evidence type="ECO:0000256" key="2">
    <source>
        <dbReference type="SAM" id="MobiDB-lite"/>
    </source>
</evidence>
<accession>Q9FLY7</accession>
<feature type="chain" id="PRO_0000396054" description="Probable F-box protein At5g39490">
    <location>
        <begin position="1"/>
        <end position="566"/>
    </location>
</feature>
<feature type="domain" description="F-box" evidence="1">
    <location>
        <begin position="8"/>
        <end position="54"/>
    </location>
</feature>
<feature type="region of interest" description="Disordered" evidence="2">
    <location>
        <begin position="318"/>
        <end position="338"/>
    </location>
</feature>
<feature type="compositionally biased region" description="Low complexity" evidence="2">
    <location>
        <begin position="320"/>
        <end position="332"/>
    </location>
</feature>
<gene>
    <name type="ordered locus">At5g39490</name>
    <name type="ORF">MUL8.18</name>
</gene>
<proteinExistence type="predicted"/>
<dbReference type="EMBL" id="AB009054">
    <property type="protein sequence ID" value="BAB11023.1"/>
    <property type="molecule type" value="Genomic_DNA"/>
</dbReference>
<dbReference type="EMBL" id="CP002688">
    <property type="protein sequence ID" value="AED94439.1"/>
    <property type="molecule type" value="Genomic_DNA"/>
</dbReference>
<dbReference type="RefSeq" id="NP_198765.1">
    <property type="nucleotide sequence ID" value="NM_123311.1"/>
</dbReference>
<dbReference type="BioGRID" id="19196">
    <property type="interactions" value="1"/>
</dbReference>
<dbReference type="PaxDb" id="3702-AT5G39490.1"/>
<dbReference type="EnsemblPlants" id="AT5G39490.1">
    <property type="protein sequence ID" value="AT5G39490.1"/>
    <property type="gene ID" value="AT5G39490"/>
</dbReference>
<dbReference type="GeneID" id="833945"/>
<dbReference type="Gramene" id="AT5G39490.1">
    <property type="protein sequence ID" value="AT5G39490.1"/>
    <property type="gene ID" value="AT5G39490"/>
</dbReference>
<dbReference type="KEGG" id="ath:AT5G39490"/>
<dbReference type="Araport" id="AT5G39490"/>
<dbReference type="TAIR" id="AT5G39490"/>
<dbReference type="eggNOG" id="ENOG502QTKH">
    <property type="taxonomic scope" value="Eukaryota"/>
</dbReference>
<dbReference type="HOGENOM" id="CLU_033857_0_0_1"/>
<dbReference type="InParanoid" id="Q9FLY7"/>
<dbReference type="OMA" id="DARCALY"/>
<dbReference type="PhylomeDB" id="Q9FLY7"/>
<dbReference type="PRO" id="PR:Q9FLY7"/>
<dbReference type="Proteomes" id="UP000006548">
    <property type="component" value="Chromosome 5"/>
</dbReference>
<dbReference type="ExpressionAtlas" id="Q9FLY7">
    <property type="expression patterns" value="baseline"/>
</dbReference>
<dbReference type="InterPro" id="IPR040275">
    <property type="entry name" value="At5g39450-like"/>
</dbReference>
<dbReference type="InterPro" id="IPR036047">
    <property type="entry name" value="F-box-like_dom_sf"/>
</dbReference>
<dbReference type="InterPro" id="IPR001810">
    <property type="entry name" value="F-box_dom"/>
</dbReference>
<dbReference type="PANTHER" id="PTHR31370">
    <property type="entry name" value="F-BOX PROTEIN FAMILY-LIKE"/>
    <property type="match status" value="1"/>
</dbReference>
<dbReference type="PANTHER" id="PTHR31370:SF2">
    <property type="entry name" value="OS08G0105100 PROTEIN"/>
    <property type="match status" value="1"/>
</dbReference>
<dbReference type="SUPFAM" id="SSF81383">
    <property type="entry name" value="F-box domain"/>
    <property type="match status" value="1"/>
</dbReference>
<dbReference type="PROSITE" id="PS50181">
    <property type="entry name" value="FBOX"/>
    <property type="match status" value="1"/>
</dbReference>
<reference key="1">
    <citation type="journal article" date="1998" name="DNA Res.">
        <title>Structural analysis of Arabidopsis thaliana chromosome 5. IV. Sequence features of the regions of 1,456,315 bp covered by nineteen physically assigned P1 and TAC clones.</title>
        <authorList>
            <person name="Sato S."/>
            <person name="Kaneko T."/>
            <person name="Kotani H."/>
            <person name="Nakamura Y."/>
            <person name="Asamizu E."/>
            <person name="Miyajima N."/>
            <person name="Tabata S."/>
        </authorList>
    </citation>
    <scope>NUCLEOTIDE SEQUENCE [LARGE SCALE GENOMIC DNA]</scope>
    <source>
        <strain>cv. Columbia</strain>
    </source>
</reference>
<reference key="2">
    <citation type="journal article" date="2017" name="Plant J.">
        <title>Araport11: a complete reannotation of the Arabidopsis thaliana reference genome.</title>
        <authorList>
            <person name="Cheng C.Y."/>
            <person name="Krishnakumar V."/>
            <person name="Chan A.P."/>
            <person name="Thibaud-Nissen F."/>
            <person name="Schobel S."/>
            <person name="Town C.D."/>
        </authorList>
    </citation>
    <scope>GENOME REANNOTATION</scope>
    <source>
        <strain>cv. Columbia</strain>
    </source>
</reference>
<protein>
    <recommendedName>
        <fullName>Probable F-box protein At5g39490</fullName>
    </recommendedName>
</protein>
<sequence>MNTELFGACLLLMLPEDIFVVISRFLSPSDICNLILCGKSLRALVDSEKTWLVQCEEVKVLPLLEIVQWRIGISSYKALCRFLVEVVKPLLGIWVQQNPELGNVVYVMPGFLSVVGCRIIPQKVAPSWIQEDRVKWSPVFEIICGFDGSNGFFLHGRDKEGSCLYPGFVMGIEKNCDVLQLEVVPRQEKSSCNEIERGASRKEGEIPFWMLAFSDRKHLLNIVTNHVGLHVVEPLNEMLFPTLKDDEVKLNERRTILLKMHKFGGNWKNMNLEEDGQLSYNPMQVKINEMLENLDDDFFFELHEDLIEVTPTESTYVLRKSSSSKNTTPSQSEIRHSNRKSFLSSGDTFGLGLKASYTEMSYYKGWPDMYVHHFLLYKLPVKKAVDHETYAGLWGGTFGWPAGKCPKGKTEKSLYLLMLTYEKEYSERVLIGTKILEGNRLVSRPNGTTMFVVKIDTPSLEPFPVDADEIHFENSYSGKGVTDGYGFRYLGSKPGSLFVITNDFLAFVWKDTKTMITLHRLNLTEILKKGLGSCVPPSHPMKNFTYMRTSSMNEFTSSSTDLCYSD</sequence>
<keyword id="KW-1185">Reference proteome</keyword>
<name>FB338_ARATH</name>
<organism>
    <name type="scientific">Arabidopsis thaliana</name>
    <name type="common">Mouse-ear cress</name>
    <dbReference type="NCBI Taxonomy" id="3702"/>
    <lineage>
        <taxon>Eukaryota</taxon>
        <taxon>Viridiplantae</taxon>
        <taxon>Streptophyta</taxon>
        <taxon>Embryophyta</taxon>
        <taxon>Tracheophyta</taxon>
        <taxon>Spermatophyta</taxon>
        <taxon>Magnoliopsida</taxon>
        <taxon>eudicotyledons</taxon>
        <taxon>Gunneridae</taxon>
        <taxon>Pentapetalae</taxon>
        <taxon>rosids</taxon>
        <taxon>malvids</taxon>
        <taxon>Brassicales</taxon>
        <taxon>Brassicaceae</taxon>
        <taxon>Camelineae</taxon>
        <taxon>Arabidopsis</taxon>
    </lineage>
</organism>